<keyword id="KW-0325">Glycoprotein</keyword>
<keyword id="KW-0964">Secreted</keyword>
<keyword id="KW-0732">Signal</keyword>
<keyword id="KW-0843">Virulence</keyword>
<sequence length="237" mass="25376">MNVLTFLIAAAVSLAVVQADVISHDAVVPFAQPTATTTEQKAGVKFKPQIHISNGCHPYPAVDANGNTSGGLKPTGSSSAGCKGSGYGSQVYGRVATYNGVYAIMYSWYFPKDSPVTGLGHRHDWEHVVVWVDDIKLDSPSIIAVSPSAHSGYNIYYPPESNTIDGYSAKVDYSSSWVVINHALDSTTDAGETQDLIMWDQLTDAARTALENTDFGDANVPMKDGNFLTKVGNAYYA</sequence>
<reference key="1">
    <citation type="journal article" date="2002" name="Plant J.">
        <title>NPP1, a Phytophthora-associated trigger of plant defense in parsley and Arabidopsis.</title>
        <authorList>
            <person name="Fellbrich G."/>
            <person name="Romanski A."/>
            <person name="Varet A."/>
            <person name="Blume B."/>
            <person name="Brunner F."/>
            <person name="Engelhardt S."/>
            <person name="Felix G."/>
            <person name="Kemmerling B."/>
            <person name="Krzymowska M."/>
            <person name="Nuernberger T."/>
        </authorList>
    </citation>
    <scope>NUCLEOTIDE SEQUENCE [GENOMIC DNA]</scope>
    <scope>FUNCTION</scope>
    <scope>DOMAIN</scope>
    <scope>MUTAGENESIS OF CYS-56 AND CYS-82</scope>
</reference>
<reference key="2">
    <citation type="journal article" date="2018" name="Mol. Plant Microbe Interact.">
        <title>Molecular Basis of Citrus sunki Susceptibility and Poncirus trifoliata Resistance Upon Phytophthora parasitica Attack.</title>
        <authorList>
            <person name="Dalio R.J.D."/>
            <person name="Maximo H.J."/>
            <person name="Oliveira T.S."/>
            <person name="Azevedo T.M."/>
            <person name="Felizatti H.L."/>
            <person name="Campos M.A."/>
            <person name="Machado M.A."/>
        </authorList>
    </citation>
    <scope>FUNCTION</scope>
</reference>
<evidence type="ECO:0000255" key="1"/>
<evidence type="ECO:0000255" key="2">
    <source>
        <dbReference type="PROSITE-ProRule" id="PRU00498"/>
    </source>
</evidence>
<evidence type="ECO:0000269" key="3">
    <source>
    </source>
</evidence>
<evidence type="ECO:0000269" key="4">
    <source>
    </source>
</evidence>
<evidence type="ECO:0000303" key="5">
    <source>
    </source>
</evidence>
<evidence type="ECO:0000305" key="6"/>
<evidence type="ECO:0000305" key="7">
    <source>
    </source>
</evidence>
<comment type="function">
    <text evidence="3 4">Secreted effector that acts as a pathogen-associated molecular pattern (PAMP) recognized by the plant immune system (PubMed:12410815, PubMed:29125028). Induces necrotic cell death and ethylene biosynthesis in parsley (PubMed:12410815). Stimulates early induced host cellular responses implicated in elicitor signal transmission such as increased levels of cytoplasmic calcium, production of reactive oxygen species (ROS), and MAP kinase activation (PubMed:12410815). Infiltration of NPP1 into leaves of Arabidopsis thaliana results in transcript accumulation of pathogenesis-related (PR) genes, production of ROS and ethylene, callose apposition, and hypersensitive response (HR)-like cell death (PubMed:12410815). NPP1-mediated induction of the PR1 gene is salicylic acid-dependent, and requires both functional NDR1 and PAD4 (PubMed:12410815).</text>
</comment>
<comment type="subcellular location">
    <subcellularLocation>
        <location evidence="7">Secreted</location>
    </subcellularLocation>
</comment>
<comment type="domain">
    <text evidence="7">The structure of NLP effectors is remarkably conserved with a high level of conservation of a central region containing the conserved undecapeptide motif AIMYAWYFPKD and heptapeptide motif GHRHDWE.</text>
</comment>
<comment type="similarity">
    <text evidence="6">Belongs to the Necrosis inducing protein (NPP1) family.</text>
</comment>
<feature type="signal peptide" evidence="1">
    <location>
        <begin position="1"/>
        <end position="19"/>
    </location>
</feature>
<feature type="chain" id="PRO_5004323168" description="Necrosis-inducing protein NPP1">
    <location>
        <begin position="20"/>
        <end position="237"/>
    </location>
</feature>
<feature type="short sequence motif" description="Conserved undecapeptide motif" evidence="7">
    <location>
        <begin position="103"/>
        <end position="113"/>
    </location>
</feature>
<feature type="short sequence motif" description="Conserved heptapetpide motif" evidence="7">
    <location>
        <begin position="120"/>
        <end position="126"/>
    </location>
</feature>
<feature type="glycosylation site" description="N-linked (GlcNAc...) asparagine" evidence="2">
    <location>
        <position position="67"/>
    </location>
</feature>
<feature type="mutagenesis site" description="Impair elicitor activity." evidence="3">
    <original>C</original>
    <variation>S</variation>
    <location>
        <position position="56"/>
    </location>
</feature>
<feature type="mutagenesis site" description="Impair elicitor activity." evidence="3">
    <original>C</original>
    <variation>S</variation>
    <location>
        <position position="82"/>
    </location>
</feature>
<proteinExistence type="evidence at protein level"/>
<protein>
    <recommendedName>
        <fullName evidence="5">Necrosis-inducing protein NPP1</fullName>
    </recommendedName>
</protein>
<gene>
    <name evidence="5" type="primary">NPP1</name>
</gene>
<accession>Q9AT28</accession>
<name>NPP1_PHYNI</name>
<organism>
    <name type="scientific">Phytophthora nicotianae</name>
    <name type="common">Potato buckeye rot agent</name>
    <name type="synonym">Phytophthora parasitica</name>
    <dbReference type="NCBI Taxonomy" id="4792"/>
    <lineage>
        <taxon>Eukaryota</taxon>
        <taxon>Sar</taxon>
        <taxon>Stramenopiles</taxon>
        <taxon>Oomycota</taxon>
        <taxon>Peronosporales</taxon>
        <taxon>Peronosporaceae</taxon>
        <taxon>Phytophthora</taxon>
    </lineage>
</organism>
<dbReference type="EMBL" id="AF352031">
    <property type="protein sequence ID" value="AAK19753.1"/>
    <property type="molecule type" value="Genomic_DNA"/>
</dbReference>
<dbReference type="SMR" id="Q9AT28"/>
<dbReference type="VEuPathDB" id="FungiDB:PPTG_15231"/>
<dbReference type="PHI-base" id="PHI:666"/>
<dbReference type="GO" id="GO:0005576">
    <property type="term" value="C:extracellular region"/>
    <property type="evidence" value="ECO:0007669"/>
    <property type="project" value="UniProtKB-SubCell"/>
</dbReference>
<dbReference type="GO" id="GO:0043655">
    <property type="term" value="C:host extracellular space"/>
    <property type="evidence" value="ECO:0000314"/>
    <property type="project" value="PAMGO_VMD"/>
</dbReference>
<dbReference type="GO" id="GO:0080185">
    <property type="term" value="P:effector-mediated activation of plant hypersensitive response by symbiont"/>
    <property type="evidence" value="ECO:0000314"/>
    <property type="project" value="GO_Central"/>
</dbReference>
<dbReference type="InterPro" id="IPR008701">
    <property type="entry name" value="NPP1"/>
</dbReference>
<dbReference type="PANTHER" id="PTHR33657">
    <property type="entry name" value="DOMAIN PROTEIN, PUTATIVE (AFU_ORTHOLOGUE AFUA_5G00600)-RELATED"/>
    <property type="match status" value="1"/>
</dbReference>
<dbReference type="PANTHER" id="PTHR33657:SF8">
    <property type="entry name" value="DOMAIN PROTEIN, PUTATIVE (AFU_ORTHOLOGUE AFUA_5G00600)-RELATED"/>
    <property type="match status" value="1"/>
</dbReference>
<dbReference type="Pfam" id="PF05630">
    <property type="entry name" value="NPP1"/>
    <property type="match status" value="1"/>
</dbReference>
<dbReference type="PIRSF" id="PIRSF029958">
    <property type="entry name" value="Necrosis-inducing_protein"/>
    <property type="match status" value="1"/>
</dbReference>